<accession>P51540</accession>
<evidence type="ECO:0000250" key="1"/>
<evidence type="ECO:0000305" key="2"/>
<name>SAHH_TRIVA</name>
<reference key="1">
    <citation type="journal article" date="1996" name="Mol. Biochem. Parasitol.">
        <title>Molecular characterisation of adenosylhomocysteinase from Trichomonas vaginalis.</title>
        <authorList>
            <person name="Bagnara A.S."/>
            <person name="Tucker V.E."/>
            <person name="Minotto L."/>
            <person name="Howes E.R."/>
            <person name="Ko G.A."/>
            <person name="Edwards M.R."/>
            <person name="Dawes I.W."/>
        </authorList>
    </citation>
    <scope>NUCLEOTIDE SEQUENCE [GENOMIC DNA]</scope>
    <source>
        <strain>WAA38</strain>
    </source>
</reference>
<comment type="function">
    <text>Adenosylhomocysteine is a competitive inhibitor of S-adenosyl-L-methionine-dependent methyl transferase reactions; therefore adenosylhomocysteinase may play a key role in the control of methylations via regulation of the intracellular concentration of adenosylhomocysteine.</text>
</comment>
<comment type="catalytic activity">
    <reaction>
        <text>S-adenosyl-L-homocysteine + H2O = L-homocysteine + adenosine</text>
        <dbReference type="Rhea" id="RHEA:21708"/>
        <dbReference type="ChEBI" id="CHEBI:15377"/>
        <dbReference type="ChEBI" id="CHEBI:16335"/>
        <dbReference type="ChEBI" id="CHEBI:57856"/>
        <dbReference type="ChEBI" id="CHEBI:58199"/>
        <dbReference type="EC" id="3.13.2.1"/>
    </reaction>
</comment>
<comment type="cofactor">
    <cofactor evidence="1">
        <name>NAD(+)</name>
        <dbReference type="ChEBI" id="CHEBI:57540"/>
    </cofactor>
    <text evidence="1">Binds 1 NAD(+) per subunit.</text>
</comment>
<comment type="pathway">
    <text>Amino-acid biosynthesis; L-homocysteine biosynthesis; L-homocysteine from S-adenosyl-L-homocysteine: step 1/1.</text>
</comment>
<comment type="similarity">
    <text evidence="2">Belongs to the adenosylhomocysteinase family.</text>
</comment>
<organism>
    <name type="scientific">Trichomonas vaginalis</name>
    <dbReference type="NCBI Taxonomy" id="5722"/>
    <lineage>
        <taxon>Eukaryota</taxon>
        <taxon>Metamonada</taxon>
        <taxon>Parabasalia</taxon>
        <taxon>Trichomonadida</taxon>
        <taxon>Trichomonadidae</taxon>
        <taxon>Trichomonas</taxon>
    </lineage>
</organism>
<sequence>MACKSPAGAPFEYRIADINLHVLGRKELTLAEKEMPGLMVLRERYSASKPLKGVRISGSLHMTVQTAVLIETLTALGADVRWASCNIFSTQDTAAAAIVVGPTGTPEKPAGIPVFAWKGETLPEYWENTYRALTWPDGQGPQQVVDDGGDATLLISKGFEFETAGAVPEPTEADNLEYRCVLATLKQVFNQDKNHWHTVAAGMNGVSEETTTGVHRLYQLEKEGKLLFPAINVNDAVTKSKFDNIYGCRHSLIDGINRASDVMIGGKTALVMGYGDVGKGCAQSLRGQGARVIITEVDPICALQAVMEGYQVRRIEEVVKDVDIFVTCTGNCDIISVDMMAQMKDKAIVGNIGHFDNEIDTDGLMKYPGIKHIPIKPEYDMWEFPDGHAILLLAEGRLLNLGCATGHPSFVMSMSFTNQTLAQLDLYEKRGNLEMKVYTLPKHLDEEVVRLHLGSLDVHLTKLTQKQADYINVPVEGPYKSDAYRY</sequence>
<proteinExistence type="inferred from homology"/>
<feature type="chain" id="PRO_0000116919" description="Adenosylhomocysteinase">
    <location>
        <begin position="1"/>
        <end position="486"/>
    </location>
</feature>
<feature type="binding site" evidence="1">
    <location>
        <position position="63"/>
    </location>
    <ligand>
        <name>substrate</name>
    </ligand>
</feature>
<feature type="binding site" evidence="1">
    <location>
        <position position="147"/>
    </location>
    <ligand>
        <name>substrate</name>
    </ligand>
</feature>
<feature type="binding site" evidence="1">
    <location>
        <position position="209"/>
    </location>
    <ligand>
        <name>substrate</name>
    </ligand>
</feature>
<feature type="binding site" evidence="1">
    <location>
        <begin position="210"/>
        <end position="212"/>
    </location>
    <ligand>
        <name>NAD(+)</name>
        <dbReference type="ChEBI" id="CHEBI:57540"/>
    </ligand>
</feature>
<feature type="binding site" evidence="1">
    <location>
        <position position="239"/>
    </location>
    <ligand>
        <name>substrate</name>
    </ligand>
</feature>
<feature type="binding site" evidence="1">
    <location>
        <position position="243"/>
    </location>
    <ligand>
        <name>substrate</name>
    </ligand>
</feature>
<feature type="binding site" evidence="1">
    <location>
        <position position="244"/>
    </location>
    <ligand>
        <name>NAD(+)</name>
        <dbReference type="ChEBI" id="CHEBI:57540"/>
    </ligand>
</feature>
<feature type="binding site" evidence="1">
    <location>
        <begin position="273"/>
        <end position="278"/>
    </location>
    <ligand>
        <name>NAD(+)</name>
        <dbReference type="ChEBI" id="CHEBI:57540"/>
    </ligand>
</feature>
<feature type="binding site" evidence="1">
    <location>
        <position position="296"/>
    </location>
    <ligand>
        <name>NAD(+)</name>
        <dbReference type="ChEBI" id="CHEBI:57540"/>
    </ligand>
</feature>
<feature type="binding site" evidence="1">
    <location>
        <position position="331"/>
    </location>
    <ligand>
        <name>NAD(+)</name>
        <dbReference type="ChEBI" id="CHEBI:57540"/>
    </ligand>
</feature>
<feature type="binding site" evidence="1">
    <location>
        <begin position="352"/>
        <end position="354"/>
    </location>
    <ligand>
        <name>NAD(+)</name>
        <dbReference type="ChEBI" id="CHEBI:57540"/>
    </ligand>
</feature>
<feature type="binding site" evidence="1">
    <location>
        <position position="400"/>
    </location>
    <ligand>
        <name>NAD(+)</name>
        <dbReference type="ChEBI" id="CHEBI:57540"/>
    </ligand>
</feature>
<protein>
    <recommendedName>
        <fullName>Adenosylhomocysteinase</fullName>
        <shortName>AdoHcyase</shortName>
        <ecNumber>3.13.2.1</ecNumber>
    </recommendedName>
    <alternativeName>
        <fullName>S-adenosyl-L-homocysteine hydrolase</fullName>
    </alternativeName>
</protein>
<keyword id="KW-0378">Hydrolase</keyword>
<keyword id="KW-0520">NAD</keyword>
<keyword id="KW-0554">One-carbon metabolism</keyword>
<dbReference type="EC" id="3.13.2.1"/>
<dbReference type="EMBL" id="U40872">
    <property type="protein sequence ID" value="AAC47319.1"/>
    <property type="molecule type" value="Genomic_DNA"/>
</dbReference>
<dbReference type="SMR" id="P51540"/>
<dbReference type="VEuPathDB" id="TrichDB:TVAG_405240"/>
<dbReference type="VEuPathDB" id="TrichDB:TVAGG3_0848460"/>
<dbReference type="eggNOG" id="KOG1370">
    <property type="taxonomic scope" value="Eukaryota"/>
</dbReference>
<dbReference type="UniPathway" id="UPA00314">
    <property type="reaction ID" value="UER00076"/>
</dbReference>
<dbReference type="GO" id="GO:0005829">
    <property type="term" value="C:cytosol"/>
    <property type="evidence" value="ECO:0007669"/>
    <property type="project" value="TreeGrafter"/>
</dbReference>
<dbReference type="GO" id="GO:0004013">
    <property type="term" value="F:adenosylhomocysteinase activity"/>
    <property type="evidence" value="ECO:0007669"/>
    <property type="project" value="RHEA"/>
</dbReference>
<dbReference type="GO" id="GO:0006730">
    <property type="term" value="P:one-carbon metabolic process"/>
    <property type="evidence" value="ECO:0007669"/>
    <property type="project" value="UniProtKB-KW"/>
</dbReference>
<dbReference type="GO" id="GO:0033353">
    <property type="term" value="P:S-adenosylmethionine cycle"/>
    <property type="evidence" value="ECO:0007669"/>
    <property type="project" value="TreeGrafter"/>
</dbReference>
<dbReference type="CDD" id="cd00401">
    <property type="entry name" value="SAHH"/>
    <property type="match status" value="1"/>
</dbReference>
<dbReference type="FunFam" id="3.40.50.720:FF:000004">
    <property type="entry name" value="Adenosylhomocysteinase"/>
    <property type="match status" value="1"/>
</dbReference>
<dbReference type="Gene3D" id="3.40.50.1480">
    <property type="entry name" value="Adenosylhomocysteinase-like"/>
    <property type="match status" value="1"/>
</dbReference>
<dbReference type="Gene3D" id="3.40.50.720">
    <property type="entry name" value="NAD(P)-binding Rossmann-like Domain"/>
    <property type="match status" value="1"/>
</dbReference>
<dbReference type="HAMAP" id="MF_00563">
    <property type="entry name" value="AdoHcyase"/>
    <property type="match status" value="1"/>
</dbReference>
<dbReference type="InterPro" id="IPR042172">
    <property type="entry name" value="Adenosylhomocyst_ase-like_sf"/>
</dbReference>
<dbReference type="InterPro" id="IPR000043">
    <property type="entry name" value="Adenosylhomocysteinase-like"/>
</dbReference>
<dbReference type="InterPro" id="IPR015878">
    <property type="entry name" value="Ado_hCys_hydrolase_NAD-bd"/>
</dbReference>
<dbReference type="InterPro" id="IPR036291">
    <property type="entry name" value="NAD(P)-bd_dom_sf"/>
</dbReference>
<dbReference type="InterPro" id="IPR020082">
    <property type="entry name" value="S-Ado-L-homoCys_hydrolase_CS"/>
</dbReference>
<dbReference type="NCBIfam" id="TIGR00936">
    <property type="entry name" value="ahcY"/>
    <property type="match status" value="1"/>
</dbReference>
<dbReference type="NCBIfam" id="NF004005">
    <property type="entry name" value="PRK05476.2-3"/>
    <property type="match status" value="1"/>
</dbReference>
<dbReference type="PANTHER" id="PTHR23420">
    <property type="entry name" value="ADENOSYLHOMOCYSTEINASE"/>
    <property type="match status" value="1"/>
</dbReference>
<dbReference type="PANTHER" id="PTHR23420:SF0">
    <property type="entry name" value="ADENOSYLHOMOCYSTEINASE"/>
    <property type="match status" value="1"/>
</dbReference>
<dbReference type="Pfam" id="PF05221">
    <property type="entry name" value="AdoHcyase"/>
    <property type="match status" value="1"/>
</dbReference>
<dbReference type="Pfam" id="PF00670">
    <property type="entry name" value="AdoHcyase_NAD"/>
    <property type="match status" value="1"/>
</dbReference>
<dbReference type="PIRSF" id="PIRSF001109">
    <property type="entry name" value="Ad_hcy_hydrolase"/>
    <property type="match status" value="1"/>
</dbReference>
<dbReference type="SMART" id="SM00996">
    <property type="entry name" value="AdoHcyase"/>
    <property type="match status" value="1"/>
</dbReference>
<dbReference type="SMART" id="SM00997">
    <property type="entry name" value="AdoHcyase_NAD"/>
    <property type="match status" value="1"/>
</dbReference>
<dbReference type="SUPFAM" id="SSF52283">
    <property type="entry name" value="Formate/glycerate dehydrogenase catalytic domain-like"/>
    <property type="match status" value="1"/>
</dbReference>
<dbReference type="SUPFAM" id="SSF51735">
    <property type="entry name" value="NAD(P)-binding Rossmann-fold domains"/>
    <property type="match status" value="1"/>
</dbReference>
<dbReference type="PROSITE" id="PS00738">
    <property type="entry name" value="ADOHCYASE_1"/>
    <property type="match status" value="1"/>
</dbReference>
<dbReference type="PROSITE" id="PS00739">
    <property type="entry name" value="ADOHCYASE_2"/>
    <property type="match status" value="1"/>
</dbReference>